<organism>
    <name type="scientific">Brucella melitensis biotype 1 (strain ATCC 23456 / CCUG 17765 / NCTC 10094 / 16M)</name>
    <dbReference type="NCBI Taxonomy" id="224914"/>
    <lineage>
        <taxon>Bacteria</taxon>
        <taxon>Pseudomonadati</taxon>
        <taxon>Pseudomonadota</taxon>
        <taxon>Alphaproteobacteria</taxon>
        <taxon>Hyphomicrobiales</taxon>
        <taxon>Brucellaceae</taxon>
        <taxon>Brucella/Ochrobactrum group</taxon>
        <taxon>Brucella</taxon>
    </lineage>
</organism>
<accession>Q8YE74</accession>
<gene>
    <name evidence="1" type="primary">pheT</name>
    <name type="ordered locus">BMEI2004</name>
</gene>
<keyword id="KW-0030">Aminoacyl-tRNA synthetase</keyword>
<keyword id="KW-0067">ATP-binding</keyword>
<keyword id="KW-0963">Cytoplasm</keyword>
<keyword id="KW-0436">Ligase</keyword>
<keyword id="KW-0460">Magnesium</keyword>
<keyword id="KW-0479">Metal-binding</keyword>
<keyword id="KW-0547">Nucleotide-binding</keyword>
<keyword id="KW-0648">Protein biosynthesis</keyword>
<keyword id="KW-0694">RNA-binding</keyword>
<keyword id="KW-0820">tRNA-binding</keyword>
<comment type="catalytic activity">
    <reaction evidence="1">
        <text>tRNA(Phe) + L-phenylalanine + ATP = L-phenylalanyl-tRNA(Phe) + AMP + diphosphate + H(+)</text>
        <dbReference type="Rhea" id="RHEA:19413"/>
        <dbReference type="Rhea" id="RHEA-COMP:9668"/>
        <dbReference type="Rhea" id="RHEA-COMP:9699"/>
        <dbReference type="ChEBI" id="CHEBI:15378"/>
        <dbReference type="ChEBI" id="CHEBI:30616"/>
        <dbReference type="ChEBI" id="CHEBI:33019"/>
        <dbReference type="ChEBI" id="CHEBI:58095"/>
        <dbReference type="ChEBI" id="CHEBI:78442"/>
        <dbReference type="ChEBI" id="CHEBI:78531"/>
        <dbReference type="ChEBI" id="CHEBI:456215"/>
        <dbReference type="EC" id="6.1.1.20"/>
    </reaction>
</comment>
<comment type="cofactor">
    <cofactor evidence="1">
        <name>Mg(2+)</name>
        <dbReference type="ChEBI" id="CHEBI:18420"/>
    </cofactor>
    <text evidence="1">Binds 2 magnesium ions per tetramer.</text>
</comment>
<comment type="subunit">
    <text evidence="1">Tetramer of two alpha and two beta subunits.</text>
</comment>
<comment type="subcellular location">
    <subcellularLocation>
        <location evidence="1">Cytoplasm</location>
    </subcellularLocation>
</comment>
<comment type="similarity">
    <text evidence="1">Belongs to the phenylalanyl-tRNA synthetase beta subunit family. Type 1 subfamily.</text>
</comment>
<dbReference type="EC" id="6.1.1.20" evidence="1"/>
<dbReference type="EMBL" id="AE008917">
    <property type="protein sequence ID" value="AAL53185.1"/>
    <property type="molecule type" value="Genomic_DNA"/>
</dbReference>
<dbReference type="PIR" id="AF3502">
    <property type="entry name" value="AF3502"/>
</dbReference>
<dbReference type="RefSeq" id="WP_011005467.1">
    <property type="nucleotide sequence ID" value="NC_003317.1"/>
</dbReference>
<dbReference type="SMR" id="Q8YE74"/>
<dbReference type="GeneID" id="29594893"/>
<dbReference type="KEGG" id="bme:BMEI2004"/>
<dbReference type="eggNOG" id="COG0072">
    <property type="taxonomic scope" value="Bacteria"/>
</dbReference>
<dbReference type="eggNOG" id="COG0073">
    <property type="taxonomic scope" value="Bacteria"/>
</dbReference>
<dbReference type="PhylomeDB" id="Q8YE74"/>
<dbReference type="Proteomes" id="UP000000419">
    <property type="component" value="Chromosome I"/>
</dbReference>
<dbReference type="GO" id="GO:0009328">
    <property type="term" value="C:phenylalanine-tRNA ligase complex"/>
    <property type="evidence" value="ECO:0007669"/>
    <property type="project" value="TreeGrafter"/>
</dbReference>
<dbReference type="GO" id="GO:0005524">
    <property type="term" value="F:ATP binding"/>
    <property type="evidence" value="ECO:0007669"/>
    <property type="project" value="UniProtKB-UniRule"/>
</dbReference>
<dbReference type="GO" id="GO:0000287">
    <property type="term" value="F:magnesium ion binding"/>
    <property type="evidence" value="ECO:0007669"/>
    <property type="project" value="UniProtKB-UniRule"/>
</dbReference>
<dbReference type="GO" id="GO:0004826">
    <property type="term" value="F:phenylalanine-tRNA ligase activity"/>
    <property type="evidence" value="ECO:0007669"/>
    <property type="project" value="UniProtKB-UniRule"/>
</dbReference>
<dbReference type="GO" id="GO:0000049">
    <property type="term" value="F:tRNA binding"/>
    <property type="evidence" value="ECO:0007669"/>
    <property type="project" value="UniProtKB-KW"/>
</dbReference>
<dbReference type="GO" id="GO:0006432">
    <property type="term" value="P:phenylalanyl-tRNA aminoacylation"/>
    <property type="evidence" value="ECO:0007669"/>
    <property type="project" value="UniProtKB-UniRule"/>
</dbReference>
<dbReference type="CDD" id="cd00769">
    <property type="entry name" value="PheRS_beta_core"/>
    <property type="match status" value="1"/>
</dbReference>
<dbReference type="CDD" id="cd02796">
    <property type="entry name" value="tRNA_bind_bactPheRS"/>
    <property type="match status" value="1"/>
</dbReference>
<dbReference type="FunFam" id="2.40.50.140:FF:000045">
    <property type="entry name" value="Phenylalanine--tRNA ligase beta subunit"/>
    <property type="match status" value="1"/>
</dbReference>
<dbReference type="Gene3D" id="3.30.56.10">
    <property type="match status" value="2"/>
</dbReference>
<dbReference type="Gene3D" id="3.30.930.10">
    <property type="entry name" value="Bira Bifunctional Protein, Domain 2"/>
    <property type="match status" value="1"/>
</dbReference>
<dbReference type="Gene3D" id="3.30.70.380">
    <property type="entry name" value="Ferrodoxin-fold anticodon-binding domain"/>
    <property type="match status" value="1"/>
</dbReference>
<dbReference type="Gene3D" id="2.40.50.140">
    <property type="entry name" value="Nucleic acid-binding proteins"/>
    <property type="match status" value="1"/>
</dbReference>
<dbReference type="Gene3D" id="3.50.40.10">
    <property type="entry name" value="Phenylalanyl-trna Synthetase, Chain B, domain 3"/>
    <property type="match status" value="1"/>
</dbReference>
<dbReference type="HAMAP" id="MF_00283">
    <property type="entry name" value="Phe_tRNA_synth_beta1"/>
    <property type="match status" value="1"/>
</dbReference>
<dbReference type="InterPro" id="IPR045864">
    <property type="entry name" value="aa-tRNA-synth_II/BPL/LPL"/>
</dbReference>
<dbReference type="InterPro" id="IPR005146">
    <property type="entry name" value="B3/B4_tRNA-bd"/>
</dbReference>
<dbReference type="InterPro" id="IPR009061">
    <property type="entry name" value="DNA-bd_dom_put_sf"/>
</dbReference>
<dbReference type="InterPro" id="IPR005121">
    <property type="entry name" value="Fdx_antiC-bd"/>
</dbReference>
<dbReference type="InterPro" id="IPR036690">
    <property type="entry name" value="Fdx_antiC-bd_sf"/>
</dbReference>
<dbReference type="InterPro" id="IPR012340">
    <property type="entry name" value="NA-bd_OB-fold"/>
</dbReference>
<dbReference type="InterPro" id="IPR045060">
    <property type="entry name" value="Phe-tRNA-ligase_IIc_bsu"/>
</dbReference>
<dbReference type="InterPro" id="IPR004532">
    <property type="entry name" value="Phe-tRNA-ligase_IIc_bsu_bact"/>
</dbReference>
<dbReference type="InterPro" id="IPR020825">
    <property type="entry name" value="Phe-tRNA_synthase-like_B3/B4"/>
</dbReference>
<dbReference type="InterPro" id="IPR041616">
    <property type="entry name" value="PheRS_beta_core"/>
</dbReference>
<dbReference type="InterPro" id="IPR002547">
    <property type="entry name" value="tRNA-bd_dom"/>
</dbReference>
<dbReference type="InterPro" id="IPR033714">
    <property type="entry name" value="tRNA_bind_bactPheRS"/>
</dbReference>
<dbReference type="InterPro" id="IPR005147">
    <property type="entry name" value="tRNA_synthase_B5-dom"/>
</dbReference>
<dbReference type="NCBIfam" id="TIGR00472">
    <property type="entry name" value="pheT_bact"/>
    <property type="match status" value="1"/>
</dbReference>
<dbReference type="NCBIfam" id="NF045760">
    <property type="entry name" value="YtpR"/>
    <property type="match status" value="1"/>
</dbReference>
<dbReference type="PANTHER" id="PTHR10947:SF0">
    <property type="entry name" value="PHENYLALANINE--TRNA LIGASE BETA SUBUNIT"/>
    <property type="match status" value="1"/>
</dbReference>
<dbReference type="PANTHER" id="PTHR10947">
    <property type="entry name" value="PHENYLALANYL-TRNA SYNTHETASE BETA CHAIN AND LEUCINE-RICH REPEAT-CONTAINING PROTEIN 47"/>
    <property type="match status" value="1"/>
</dbReference>
<dbReference type="Pfam" id="PF03483">
    <property type="entry name" value="B3_4"/>
    <property type="match status" value="1"/>
</dbReference>
<dbReference type="Pfam" id="PF03484">
    <property type="entry name" value="B5"/>
    <property type="match status" value="1"/>
</dbReference>
<dbReference type="Pfam" id="PF03147">
    <property type="entry name" value="FDX-ACB"/>
    <property type="match status" value="1"/>
</dbReference>
<dbReference type="Pfam" id="PF01588">
    <property type="entry name" value="tRNA_bind"/>
    <property type="match status" value="1"/>
</dbReference>
<dbReference type="Pfam" id="PF17759">
    <property type="entry name" value="tRNA_synthFbeta"/>
    <property type="match status" value="1"/>
</dbReference>
<dbReference type="SMART" id="SM00873">
    <property type="entry name" value="B3_4"/>
    <property type="match status" value="1"/>
</dbReference>
<dbReference type="SMART" id="SM00874">
    <property type="entry name" value="B5"/>
    <property type="match status" value="1"/>
</dbReference>
<dbReference type="SMART" id="SM00896">
    <property type="entry name" value="FDX-ACB"/>
    <property type="match status" value="1"/>
</dbReference>
<dbReference type="SUPFAM" id="SSF54991">
    <property type="entry name" value="Anticodon-binding domain of PheRS"/>
    <property type="match status" value="1"/>
</dbReference>
<dbReference type="SUPFAM" id="SSF55681">
    <property type="entry name" value="Class II aaRS and biotin synthetases"/>
    <property type="match status" value="1"/>
</dbReference>
<dbReference type="SUPFAM" id="SSF50249">
    <property type="entry name" value="Nucleic acid-binding proteins"/>
    <property type="match status" value="1"/>
</dbReference>
<dbReference type="SUPFAM" id="SSF56037">
    <property type="entry name" value="PheT/TilS domain"/>
    <property type="match status" value="1"/>
</dbReference>
<dbReference type="SUPFAM" id="SSF46955">
    <property type="entry name" value="Putative DNA-binding domain"/>
    <property type="match status" value="1"/>
</dbReference>
<dbReference type="PROSITE" id="PS51483">
    <property type="entry name" value="B5"/>
    <property type="match status" value="1"/>
</dbReference>
<dbReference type="PROSITE" id="PS51447">
    <property type="entry name" value="FDX_ACB"/>
    <property type="match status" value="1"/>
</dbReference>
<dbReference type="PROSITE" id="PS50886">
    <property type="entry name" value="TRBD"/>
    <property type="match status" value="1"/>
</dbReference>
<protein>
    <recommendedName>
        <fullName evidence="1">Phenylalanine--tRNA ligase beta subunit</fullName>
        <ecNumber evidence="1">6.1.1.20</ecNumber>
    </recommendedName>
    <alternativeName>
        <fullName evidence="1">Phenylalanyl-tRNA synthetase beta subunit</fullName>
        <shortName evidence="1">PheRS</shortName>
    </alternativeName>
</protein>
<sequence>MKFTLSWLKDHLETDATLDEIVEKLTDIGLEVESVDDRAAFRAFTIARVLTATRHPDADKLQVLSVDTGDGKPVQVVCGAPNARAGLVGVLGRPGDYVPGLDVTLSVGKIRGVESFGMMCSERELDFSDEHNGIIDLAENAPVGTSFAAYMGFNDPIIEIGLTPNRADCTGIRGIARDLAAAGLGTLKNTLPDAVKGEGETPVKVILDQDAGNPFCTGFALRMVKGVKNGPSPKWMQQRLKAIGLRPINALVDITNYVTFDQGRPLHVFDAAKVKGNLTVRTARDGETILALDQREYKLNAGMYVIADENGPESIAGIMGGEHSGCDENTVDVLIESALWDPRMIARTGRELGIVTDARYRFERGVDPEMMVPGAEIATKLVLELCGGQPTVLDVVGYKPHTARVIDFPVTEVKRLTGLDVSYEDAFDILKRLGFGVEGDGKTIRATVPSWRGDVEGKADLVEEVMRIHGINRIDPQPLPSHGAVNGRILTTLQIRTRHARRMLASRGMMEAVTYSFISEAQAKAFGGGKPELKLANPIAADMSDMRPSLLPGLLAAAQRNADRGFDDIALFEVSGIYEGDTPDKQRRVAGGVRRGTAKVEGAGRFWAGNAAPVGVFDAKADALAALEAAGAPVDRIQIEAGGPEWLHPGRSGTLKLGPKVVLGTFGEFHPDTLEALDVSGALCGFEVYLDAIPEPKAKSARTKPALSLSLFQSLKRDYAFVVDAAVEAGNVVKAVSSADKKLIVGVQVFDIFTGASLGEGKKSIAVEVLLQPQDRTLTDEDLEVLSKQIVASVAKQTGGVLRG</sequence>
<proteinExistence type="inferred from homology"/>
<evidence type="ECO:0000255" key="1">
    <source>
        <dbReference type="HAMAP-Rule" id="MF_00283"/>
    </source>
</evidence>
<reference key="1">
    <citation type="journal article" date="2002" name="Proc. Natl. Acad. Sci. U.S.A.">
        <title>The genome sequence of the facultative intracellular pathogen Brucella melitensis.</title>
        <authorList>
            <person name="DelVecchio V.G."/>
            <person name="Kapatral V."/>
            <person name="Redkar R.J."/>
            <person name="Patra G."/>
            <person name="Mujer C."/>
            <person name="Los T."/>
            <person name="Ivanova N."/>
            <person name="Anderson I."/>
            <person name="Bhattacharyya A."/>
            <person name="Lykidis A."/>
            <person name="Reznik G."/>
            <person name="Jablonski L."/>
            <person name="Larsen N."/>
            <person name="D'Souza M."/>
            <person name="Bernal A."/>
            <person name="Mazur M."/>
            <person name="Goltsman E."/>
            <person name="Selkov E."/>
            <person name="Elzer P.H."/>
            <person name="Hagius S."/>
            <person name="O'Callaghan D."/>
            <person name="Letesson J.-J."/>
            <person name="Haselkorn R."/>
            <person name="Kyrpides N.C."/>
            <person name="Overbeek R."/>
        </authorList>
    </citation>
    <scope>NUCLEOTIDE SEQUENCE [LARGE SCALE GENOMIC DNA]</scope>
    <source>
        <strain>ATCC 23456 / CCUG 17765 / NCTC 10094 / 16M</strain>
    </source>
</reference>
<name>SYFB_BRUME</name>
<feature type="chain" id="PRO_0000126854" description="Phenylalanine--tRNA ligase beta subunit">
    <location>
        <begin position="1"/>
        <end position="804"/>
    </location>
</feature>
<feature type="domain" description="tRNA-binding" evidence="1">
    <location>
        <begin position="38"/>
        <end position="148"/>
    </location>
</feature>
<feature type="domain" description="B5" evidence="1">
    <location>
        <begin position="401"/>
        <end position="476"/>
    </location>
</feature>
<feature type="domain" description="FDX-ACB" evidence="1">
    <location>
        <begin position="710"/>
        <end position="803"/>
    </location>
</feature>
<feature type="binding site" evidence="1">
    <location>
        <position position="454"/>
    </location>
    <ligand>
        <name>Mg(2+)</name>
        <dbReference type="ChEBI" id="CHEBI:18420"/>
        <note>shared with alpha subunit</note>
    </ligand>
</feature>
<feature type="binding site" evidence="1">
    <location>
        <position position="460"/>
    </location>
    <ligand>
        <name>Mg(2+)</name>
        <dbReference type="ChEBI" id="CHEBI:18420"/>
        <note>shared with alpha subunit</note>
    </ligand>
</feature>
<feature type="binding site" evidence="1">
    <location>
        <position position="463"/>
    </location>
    <ligand>
        <name>Mg(2+)</name>
        <dbReference type="ChEBI" id="CHEBI:18420"/>
        <note>shared with alpha subunit</note>
    </ligand>
</feature>
<feature type="binding site" evidence="1">
    <location>
        <position position="464"/>
    </location>
    <ligand>
        <name>Mg(2+)</name>
        <dbReference type="ChEBI" id="CHEBI:18420"/>
        <note>shared with alpha subunit</note>
    </ligand>
</feature>